<feature type="chain" id="PRO_0000288885" description="Uncharacterized protein C9orf163">
    <location>
        <begin position="1"/>
        <end position="203"/>
    </location>
</feature>
<feature type="region of interest" description="Disordered" evidence="1">
    <location>
        <begin position="174"/>
        <end position="203"/>
    </location>
</feature>
<feature type="sequence variant" id="VAR_032526" description="In dbSNP:rs34376913.">
    <original>L</original>
    <variation>P</variation>
    <location>
        <position position="5"/>
    </location>
</feature>
<dbReference type="EMBL" id="AK094098">
    <property type="protein sequence ID" value="BAC04285.1"/>
    <property type="molecule type" value="mRNA"/>
</dbReference>
<dbReference type="EMBL" id="AL592301">
    <property type="status" value="NOT_ANNOTATED_CDS"/>
    <property type="molecule type" value="Genomic_DNA"/>
</dbReference>
<dbReference type="EMBL" id="BC117152">
    <property type="protein sequence ID" value="AAI17153.1"/>
    <property type="molecule type" value="mRNA"/>
</dbReference>
<dbReference type="EMBL" id="BC117154">
    <property type="protein sequence ID" value="AAI17155.1"/>
    <property type="molecule type" value="mRNA"/>
</dbReference>
<dbReference type="RefSeq" id="NP_689784.1">
    <property type="nucleotide sequence ID" value="NM_152571.2"/>
</dbReference>
<dbReference type="BioGRID" id="127642">
    <property type="interactions" value="70"/>
</dbReference>
<dbReference type="IntAct" id="Q8N9P6">
    <property type="interactions" value="48"/>
</dbReference>
<dbReference type="iPTMnet" id="Q8N9P6"/>
<dbReference type="PhosphoSitePlus" id="Q8N9P6"/>
<dbReference type="BioMuta" id="HGNC:26718"/>
<dbReference type="jPOST" id="Q8N9P6"/>
<dbReference type="PaxDb" id="9606-ENSP00000346345"/>
<dbReference type="DNASU" id="158055"/>
<dbReference type="AGR" id="HGNC:26718"/>
<dbReference type="GeneCards" id="C9orf163"/>
<dbReference type="HGNC" id="HGNC:26718">
    <property type="gene designation" value="C9orf163"/>
</dbReference>
<dbReference type="neXtProt" id="NX_Q8N9P6"/>
<dbReference type="PharmGKB" id="PA144596496"/>
<dbReference type="eggNOG" id="ENOG502TKQS">
    <property type="taxonomic scope" value="Eukaryota"/>
</dbReference>
<dbReference type="InParanoid" id="Q8N9P6"/>
<dbReference type="PAN-GO" id="Q8N9P6">
    <property type="GO annotations" value="0 GO annotations based on evolutionary models"/>
</dbReference>
<dbReference type="PhylomeDB" id="Q8N9P6"/>
<dbReference type="TreeFam" id="TF354037"/>
<dbReference type="PathwayCommons" id="Q8N9P6"/>
<dbReference type="SignaLink" id="Q8N9P6"/>
<dbReference type="BioGRID-ORCS" id="158055">
    <property type="hits" value="21 hits in 755 CRISPR screens"/>
</dbReference>
<dbReference type="GenomeRNAi" id="158055"/>
<dbReference type="Pharos" id="Q8N9P6">
    <property type="development level" value="Tdark"/>
</dbReference>
<dbReference type="Proteomes" id="UP000005640">
    <property type="component" value="Unplaced"/>
</dbReference>
<dbReference type="RNAct" id="Q8N9P6">
    <property type="molecule type" value="protein"/>
</dbReference>
<reference key="1">
    <citation type="journal article" date="2004" name="Nat. Genet.">
        <title>Complete sequencing and characterization of 21,243 full-length human cDNAs.</title>
        <authorList>
            <person name="Ota T."/>
            <person name="Suzuki Y."/>
            <person name="Nishikawa T."/>
            <person name="Otsuki T."/>
            <person name="Sugiyama T."/>
            <person name="Irie R."/>
            <person name="Wakamatsu A."/>
            <person name="Hayashi K."/>
            <person name="Sato H."/>
            <person name="Nagai K."/>
            <person name="Kimura K."/>
            <person name="Makita H."/>
            <person name="Sekine M."/>
            <person name="Obayashi M."/>
            <person name="Nishi T."/>
            <person name="Shibahara T."/>
            <person name="Tanaka T."/>
            <person name="Ishii S."/>
            <person name="Yamamoto J."/>
            <person name="Saito K."/>
            <person name="Kawai Y."/>
            <person name="Isono Y."/>
            <person name="Nakamura Y."/>
            <person name="Nagahari K."/>
            <person name="Murakami K."/>
            <person name="Yasuda T."/>
            <person name="Iwayanagi T."/>
            <person name="Wagatsuma M."/>
            <person name="Shiratori A."/>
            <person name="Sudo H."/>
            <person name="Hosoiri T."/>
            <person name="Kaku Y."/>
            <person name="Kodaira H."/>
            <person name="Kondo H."/>
            <person name="Sugawara M."/>
            <person name="Takahashi M."/>
            <person name="Kanda K."/>
            <person name="Yokoi T."/>
            <person name="Furuya T."/>
            <person name="Kikkawa E."/>
            <person name="Omura Y."/>
            <person name="Abe K."/>
            <person name="Kamihara K."/>
            <person name="Katsuta N."/>
            <person name="Sato K."/>
            <person name="Tanikawa M."/>
            <person name="Yamazaki M."/>
            <person name="Ninomiya K."/>
            <person name="Ishibashi T."/>
            <person name="Yamashita H."/>
            <person name="Murakawa K."/>
            <person name="Fujimori K."/>
            <person name="Tanai H."/>
            <person name="Kimata M."/>
            <person name="Watanabe M."/>
            <person name="Hiraoka S."/>
            <person name="Chiba Y."/>
            <person name="Ishida S."/>
            <person name="Ono Y."/>
            <person name="Takiguchi S."/>
            <person name="Watanabe S."/>
            <person name="Yosida M."/>
            <person name="Hotuta T."/>
            <person name="Kusano J."/>
            <person name="Kanehori K."/>
            <person name="Takahashi-Fujii A."/>
            <person name="Hara H."/>
            <person name="Tanase T.-O."/>
            <person name="Nomura Y."/>
            <person name="Togiya S."/>
            <person name="Komai F."/>
            <person name="Hara R."/>
            <person name="Takeuchi K."/>
            <person name="Arita M."/>
            <person name="Imose N."/>
            <person name="Musashino K."/>
            <person name="Yuuki H."/>
            <person name="Oshima A."/>
            <person name="Sasaki N."/>
            <person name="Aotsuka S."/>
            <person name="Yoshikawa Y."/>
            <person name="Matsunawa H."/>
            <person name="Ichihara T."/>
            <person name="Shiohata N."/>
            <person name="Sano S."/>
            <person name="Moriya S."/>
            <person name="Momiyama H."/>
            <person name="Satoh N."/>
            <person name="Takami S."/>
            <person name="Terashima Y."/>
            <person name="Suzuki O."/>
            <person name="Nakagawa S."/>
            <person name="Senoh A."/>
            <person name="Mizoguchi H."/>
            <person name="Goto Y."/>
            <person name="Shimizu F."/>
            <person name="Wakebe H."/>
            <person name="Hishigaki H."/>
            <person name="Watanabe T."/>
            <person name="Sugiyama A."/>
            <person name="Takemoto M."/>
            <person name="Kawakami B."/>
            <person name="Yamazaki M."/>
            <person name="Watanabe K."/>
            <person name="Kumagai A."/>
            <person name="Itakura S."/>
            <person name="Fukuzumi Y."/>
            <person name="Fujimori Y."/>
            <person name="Komiyama M."/>
            <person name="Tashiro H."/>
            <person name="Tanigami A."/>
            <person name="Fujiwara T."/>
            <person name="Ono T."/>
            <person name="Yamada K."/>
            <person name="Fujii Y."/>
            <person name="Ozaki K."/>
            <person name="Hirao M."/>
            <person name="Ohmori Y."/>
            <person name="Kawabata A."/>
            <person name="Hikiji T."/>
            <person name="Kobatake N."/>
            <person name="Inagaki H."/>
            <person name="Ikema Y."/>
            <person name="Okamoto S."/>
            <person name="Okitani R."/>
            <person name="Kawakami T."/>
            <person name="Noguchi S."/>
            <person name="Itoh T."/>
            <person name="Shigeta K."/>
            <person name="Senba T."/>
            <person name="Matsumura K."/>
            <person name="Nakajima Y."/>
            <person name="Mizuno T."/>
            <person name="Morinaga M."/>
            <person name="Sasaki M."/>
            <person name="Togashi T."/>
            <person name="Oyama M."/>
            <person name="Hata H."/>
            <person name="Watanabe M."/>
            <person name="Komatsu T."/>
            <person name="Mizushima-Sugano J."/>
            <person name="Satoh T."/>
            <person name="Shirai Y."/>
            <person name="Takahashi Y."/>
            <person name="Nakagawa K."/>
            <person name="Okumura K."/>
            <person name="Nagase T."/>
            <person name="Nomura N."/>
            <person name="Kikuchi H."/>
            <person name="Masuho Y."/>
            <person name="Yamashita R."/>
            <person name="Nakai K."/>
            <person name="Yada T."/>
            <person name="Nakamura Y."/>
            <person name="Ohara O."/>
            <person name="Isogai T."/>
            <person name="Sugano S."/>
        </authorList>
    </citation>
    <scope>NUCLEOTIDE SEQUENCE [LARGE SCALE MRNA]</scope>
    <source>
        <tissue>Adrenal gland</tissue>
    </source>
</reference>
<reference key="2">
    <citation type="journal article" date="2004" name="Nature">
        <title>DNA sequence and analysis of human chromosome 9.</title>
        <authorList>
            <person name="Humphray S.J."/>
            <person name="Oliver K."/>
            <person name="Hunt A.R."/>
            <person name="Plumb R.W."/>
            <person name="Loveland J.E."/>
            <person name="Howe K.L."/>
            <person name="Andrews T.D."/>
            <person name="Searle S."/>
            <person name="Hunt S.E."/>
            <person name="Scott C.E."/>
            <person name="Jones M.C."/>
            <person name="Ainscough R."/>
            <person name="Almeida J.P."/>
            <person name="Ambrose K.D."/>
            <person name="Ashwell R.I.S."/>
            <person name="Babbage A.K."/>
            <person name="Babbage S."/>
            <person name="Bagguley C.L."/>
            <person name="Bailey J."/>
            <person name="Banerjee R."/>
            <person name="Barker D.J."/>
            <person name="Barlow K.F."/>
            <person name="Bates K."/>
            <person name="Beasley H."/>
            <person name="Beasley O."/>
            <person name="Bird C.P."/>
            <person name="Bray-Allen S."/>
            <person name="Brown A.J."/>
            <person name="Brown J.Y."/>
            <person name="Burford D."/>
            <person name="Burrill W."/>
            <person name="Burton J."/>
            <person name="Carder C."/>
            <person name="Carter N.P."/>
            <person name="Chapman J.C."/>
            <person name="Chen Y."/>
            <person name="Clarke G."/>
            <person name="Clark S.Y."/>
            <person name="Clee C.M."/>
            <person name="Clegg S."/>
            <person name="Collier R.E."/>
            <person name="Corby N."/>
            <person name="Crosier M."/>
            <person name="Cummings A.T."/>
            <person name="Davies J."/>
            <person name="Dhami P."/>
            <person name="Dunn M."/>
            <person name="Dutta I."/>
            <person name="Dyer L.W."/>
            <person name="Earthrowl M.E."/>
            <person name="Faulkner L."/>
            <person name="Fleming C.J."/>
            <person name="Frankish A."/>
            <person name="Frankland J.A."/>
            <person name="French L."/>
            <person name="Fricker D.G."/>
            <person name="Garner P."/>
            <person name="Garnett J."/>
            <person name="Ghori J."/>
            <person name="Gilbert J.G.R."/>
            <person name="Glison C."/>
            <person name="Grafham D.V."/>
            <person name="Gribble S."/>
            <person name="Griffiths C."/>
            <person name="Griffiths-Jones S."/>
            <person name="Grocock R."/>
            <person name="Guy J."/>
            <person name="Hall R.E."/>
            <person name="Hammond S."/>
            <person name="Harley J.L."/>
            <person name="Harrison E.S.I."/>
            <person name="Hart E.A."/>
            <person name="Heath P.D."/>
            <person name="Henderson C.D."/>
            <person name="Hopkins B.L."/>
            <person name="Howard P.J."/>
            <person name="Howden P.J."/>
            <person name="Huckle E."/>
            <person name="Johnson C."/>
            <person name="Johnson D."/>
            <person name="Joy A.A."/>
            <person name="Kay M."/>
            <person name="Keenan S."/>
            <person name="Kershaw J.K."/>
            <person name="Kimberley A.M."/>
            <person name="King A."/>
            <person name="Knights A."/>
            <person name="Laird G.K."/>
            <person name="Langford C."/>
            <person name="Lawlor S."/>
            <person name="Leongamornlert D.A."/>
            <person name="Leversha M."/>
            <person name="Lloyd C."/>
            <person name="Lloyd D.M."/>
            <person name="Lovell J."/>
            <person name="Martin S."/>
            <person name="Mashreghi-Mohammadi M."/>
            <person name="Matthews L."/>
            <person name="McLaren S."/>
            <person name="McLay K.E."/>
            <person name="McMurray A."/>
            <person name="Milne S."/>
            <person name="Nickerson T."/>
            <person name="Nisbett J."/>
            <person name="Nordsiek G."/>
            <person name="Pearce A.V."/>
            <person name="Peck A.I."/>
            <person name="Porter K.M."/>
            <person name="Pandian R."/>
            <person name="Pelan S."/>
            <person name="Phillimore B."/>
            <person name="Povey S."/>
            <person name="Ramsey Y."/>
            <person name="Rand V."/>
            <person name="Scharfe M."/>
            <person name="Sehra H.K."/>
            <person name="Shownkeen R."/>
            <person name="Sims S.K."/>
            <person name="Skuce C.D."/>
            <person name="Smith M."/>
            <person name="Steward C.A."/>
            <person name="Swarbreck D."/>
            <person name="Sycamore N."/>
            <person name="Tester J."/>
            <person name="Thorpe A."/>
            <person name="Tracey A."/>
            <person name="Tromans A."/>
            <person name="Thomas D.W."/>
            <person name="Wall M."/>
            <person name="Wallis J.M."/>
            <person name="West A.P."/>
            <person name="Whitehead S.L."/>
            <person name="Willey D.L."/>
            <person name="Williams S.A."/>
            <person name="Wilming L."/>
            <person name="Wray P.W."/>
            <person name="Young L."/>
            <person name="Ashurst J.L."/>
            <person name="Coulson A."/>
            <person name="Blocker H."/>
            <person name="Durbin R.M."/>
            <person name="Sulston J.E."/>
            <person name="Hubbard T."/>
            <person name="Jackson M.J."/>
            <person name="Bentley D.R."/>
            <person name="Beck S."/>
            <person name="Rogers J."/>
            <person name="Dunham I."/>
        </authorList>
    </citation>
    <scope>NUCLEOTIDE SEQUENCE [LARGE SCALE GENOMIC DNA]</scope>
</reference>
<reference key="3">
    <citation type="journal article" date="2004" name="Genome Res.">
        <title>The status, quality, and expansion of the NIH full-length cDNA project: the Mammalian Gene Collection (MGC).</title>
        <authorList>
            <consortium name="The MGC Project Team"/>
        </authorList>
    </citation>
    <scope>NUCLEOTIDE SEQUENCE [LARGE SCALE MRNA]</scope>
    <source>
        <tissue>Lung</tissue>
    </source>
</reference>
<evidence type="ECO:0000256" key="1">
    <source>
        <dbReference type="SAM" id="MobiDB-lite"/>
    </source>
</evidence>
<keyword id="KW-1185">Reference proteome</keyword>
<name>CI163_HUMAN</name>
<organism>
    <name type="scientific">Homo sapiens</name>
    <name type="common">Human</name>
    <dbReference type="NCBI Taxonomy" id="9606"/>
    <lineage>
        <taxon>Eukaryota</taxon>
        <taxon>Metazoa</taxon>
        <taxon>Chordata</taxon>
        <taxon>Craniata</taxon>
        <taxon>Vertebrata</taxon>
        <taxon>Euteleostomi</taxon>
        <taxon>Mammalia</taxon>
        <taxon>Eutheria</taxon>
        <taxon>Euarchontoglires</taxon>
        <taxon>Primates</taxon>
        <taxon>Haplorrhini</taxon>
        <taxon>Catarrhini</taxon>
        <taxon>Hominidae</taxon>
        <taxon>Homo</taxon>
    </lineage>
</organism>
<accession>Q8N9P6</accession>
<gene>
    <name type="primary">C9orf163</name>
</gene>
<proteinExistence type="evidence at transcript level"/>
<protein>
    <recommendedName>
        <fullName>Uncharacterized protein C9orf163</fullName>
    </recommendedName>
</protein>
<sequence length="203" mass="22154">MPGPLTCTPAWQGQGRAAAFLCCSFQRAGAVVGVPARWHRGRLSSQQRLRSSLGGSHPCPQLGRRLVREGVISVPRQQGRRRCRESFSPADVAPGPICSANICLSGVRFLTCLNRVREHVVGPSPSPAAPICFFPVVEALCTLRGRRCHCLPFPKRGMQRWMLPLRRGARLLPLASSKNPRARSPGLDPLGSSETLWSHRGGH</sequence>